<keyword id="KW-1003">Cell membrane</keyword>
<keyword id="KW-1015">Disulfide bond</keyword>
<keyword id="KW-0297">G-protein coupled receptor</keyword>
<keyword id="KW-0325">Glycoprotein</keyword>
<keyword id="KW-0472">Membrane</keyword>
<keyword id="KW-0675">Receptor</keyword>
<keyword id="KW-1185">Reference proteome</keyword>
<keyword id="KW-0807">Transducer</keyword>
<keyword id="KW-0812">Transmembrane</keyword>
<keyword id="KW-1133">Transmembrane helix</keyword>
<proteinExistence type="evidence at transcript level"/>
<comment type="function">
    <text evidence="5 6">Receptor for melanin-concentrating hormone, coupled to G proteins that inhibit adenylyl cyclase.</text>
</comment>
<comment type="subunit">
    <text evidence="1">Interacts with NCDN.</text>
</comment>
<comment type="subcellular location">
    <subcellularLocation>
        <location>Cell membrane</location>
        <topology evidence="2">Multi-pass membrane protein</topology>
    </subcellularLocation>
</comment>
<comment type="tissue specificity">
    <text>High level in the brain, moderate amounts in the eye and skeletal muscle, and small amounts in tongue and pituitary.</text>
</comment>
<comment type="similarity">
    <text evidence="3">Belongs to the G-protein coupled receptor 1 family.</text>
</comment>
<dbReference type="EMBL" id="AF008650">
    <property type="protein sequence ID" value="AAC27977.1"/>
    <property type="molecule type" value="mRNA"/>
</dbReference>
<dbReference type="EMBL" id="AABR07058532">
    <property type="status" value="NOT_ANNOTATED_CDS"/>
    <property type="molecule type" value="Genomic_DNA"/>
</dbReference>
<dbReference type="EMBL" id="CH473950">
    <property type="protein sequence ID" value="EDM15736.1"/>
    <property type="molecule type" value="Genomic_DNA"/>
</dbReference>
<dbReference type="EMBL" id="U77953">
    <property type="protein sequence ID" value="AAC14588.1"/>
    <property type="molecule type" value="Genomic_DNA"/>
</dbReference>
<dbReference type="RefSeq" id="NP_113946.1">
    <property type="nucleotide sequence ID" value="NM_031758.1"/>
</dbReference>
<dbReference type="SMR" id="P97639"/>
<dbReference type="FunCoup" id="P97639">
    <property type="interactions" value="159"/>
</dbReference>
<dbReference type="IntAct" id="P97639">
    <property type="interactions" value="1"/>
</dbReference>
<dbReference type="MINT" id="P97639"/>
<dbReference type="STRING" id="10116.ENSRNOP00000025564"/>
<dbReference type="BindingDB" id="P97639"/>
<dbReference type="ChEMBL" id="CHEMBL1075228"/>
<dbReference type="GuidetoPHARMACOLOGY" id="280"/>
<dbReference type="GlyCosmos" id="P97639">
    <property type="glycosylation" value="3 sites, No reported glycans"/>
</dbReference>
<dbReference type="GlyGen" id="P97639">
    <property type="glycosylation" value="4 sites"/>
</dbReference>
<dbReference type="iPTMnet" id="P97639"/>
<dbReference type="PhosphoSitePlus" id="P97639"/>
<dbReference type="PaxDb" id="10116-ENSRNOP00000025564"/>
<dbReference type="Ensembl" id="ENSRNOT00000025564.7">
    <property type="protein sequence ID" value="ENSRNOP00000025564.4"/>
    <property type="gene ID" value="ENSRNOG00000018895.7"/>
</dbReference>
<dbReference type="GeneID" id="83567"/>
<dbReference type="KEGG" id="rno:83567"/>
<dbReference type="UCSC" id="RGD:619841">
    <property type="organism name" value="rat"/>
</dbReference>
<dbReference type="AGR" id="RGD:619841"/>
<dbReference type="CTD" id="2847"/>
<dbReference type="RGD" id="619841">
    <property type="gene designation" value="Mchr1"/>
</dbReference>
<dbReference type="eggNOG" id="KOG3656">
    <property type="taxonomic scope" value="Eukaryota"/>
</dbReference>
<dbReference type="GeneTree" id="ENSGT00940000154272"/>
<dbReference type="InParanoid" id="P97639"/>
<dbReference type="OMA" id="KSKFHGC"/>
<dbReference type="OrthoDB" id="6076970at2759"/>
<dbReference type="PhylomeDB" id="P97639"/>
<dbReference type="Reactome" id="R-RNO-375276">
    <property type="pathway name" value="Peptide ligand-binding receptors"/>
</dbReference>
<dbReference type="Reactome" id="R-RNO-416476">
    <property type="pathway name" value="G alpha (q) signalling events"/>
</dbReference>
<dbReference type="Reactome" id="R-RNO-418594">
    <property type="pathway name" value="G alpha (i) signalling events"/>
</dbReference>
<dbReference type="Reactome" id="R-RNO-5620922">
    <property type="pathway name" value="BBSome-mediated cargo-targeting to cilium"/>
</dbReference>
<dbReference type="PRO" id="PR:P97639"/>
<dbReference type="Proteomes" id="UP000002494">
    <property type="component" value="Chromosome 7"/>
</dbReference>
<dbReference type="Proteomes" id="UP000234681">
    <property type="component" value="Chromosome 7"/>
</dbReference>
<dbReference type="Bgee" id="ENSRNOG00000018895">
    <property type="expression patterns" value="Expressed in cerebral cortex and 5 other cell types or tissues"/>
</dbReference>
<dbReference type="GO" id="GO:0060170">
    <property type="term" value="C:ciliary membrane"/>
    <property type="evidence" value="ECO:0000266"/>
    <property type="project" value="RGD"/>
</dbReference>
<dbReference type="GO" id="GO:0005929">
    <property type="term" value="C:cilium"/>
    <property type="evidence" value="ECO:0000266"/>
    <property type="project" value="RGD"/>
</dbReference>
<dbReference type="GO" id="GO:0043005">
    <property type="term" value="C:neuron projection"/>
    <property type="evidence" value="ECO:0000266"/>
    <property type="project" value="RGD"/>
</dbReference>
<dbReference type="GO" id="GO:0097730">
    <property type="term" value="C:non-motile cilium"/>
    <property type="evidence" value="ECO:0000266"/>
    <property type="project" value="RGD"/>
</dbReference>
<dbReference type="GO" id="GO:0005886">
    <property type="term" value="C:plasma membrane"/>
    <property type="evidence" value="ECO:0000250"/>
    <property type="project" value="BHF-UCL"/>
</dbReference>
<dbReference type="GO" id="GO:0004930">
    <property type="term" value="F:G protein-coupled receptor activity"/>
    <property type="evidence" value="ECO:0000318"/>
    <property type="project" value="GO_Central"/>
</dbReference>
<dbReference type="GO" id="GO:0042562">
    <property type="term" value="F:hormone binding"/>
    <property type="evidence" value="ECO:0000314"/>
    <property type="project" value="RGD"/>
</dbReference>
<dbReference type="GO" id="GO:0030273">
    <property type="term" value="F:melanin-concentrating hormone receptor activity"/>
    <property type="evidence" value="ECO:0000314"/>
    <property type="project" value="RGD"/>
</dbReference>
<dbReference type="GO" id="GO:0042923">
    <property type="term" value="F:neuropeptide binding"/>
    <property type="evidence" value="ECO:0000318"/>
    <property type="project" value="GO_Central"/>
</dbReference>
<dbReference type="GO" id="GO:0005102">
    <property type="term" value="F:signaling receptor binding"/>
    <property type="evidence" value="ECO:0000266"/>
    <property type="project" value="RGD"/>
</dbReference>
<dbReference type="GO" id="GO:0007166">
    <property type="term" value="P:cell surface receptor signaling pathway"/>
    <property type="evidence" value="ECO:0000315"/>
    <property type="project" value="RGD"/>
</dbReference>
<dbReference type="GO" id="GO:0007218">
    <property type="term" value="P:neuropeptide signaling pathway"/>
    <property type="evidence" value="ECO:0000318"/>
    <property type="project" value="GO_Central"/>
</dbReference>
<dbReference type="GO" id="GO:0051928">
    <property type="term" value="P:positive regulation of calcium ion transport"/>
    <property type="evidence" value="ECO:0000315"/>
    <property type="project" value="RGD"/>
</dbReference>
<dbReference type="GO" id="GO:0007204">
    <property type="term" value="P:positive regulation of cytosolic calcium ion concentration"/>
    <property type="evidence" value="ECO:0000315"/>
    <property type="project" value="RGD"/>
</dbReference>
<dbReference type="CDD" id="cd15338">
    <property type="entry name" value="7tmA_MCHR1"/>
    <property type="match status" value="1"/>
</dbReference>
<dbReference type="FunFam" id="1.20.1070.10:FF:000115">
    <property type="entry name" value="Melanin-concentrating hormone receptor 1"/>
    <property type="match status" value="1"/>
</dbReference>
<dbReference type="Gene3D" id="1.20.1070.10">
    <property type="entry name" value="Rhodopsin 7-helix transmembrane proteins"/>
    <property type="match status" value="1"/>
</dbReference>
<dbReference type="InterPro" id="IPR000276">
    <property type="entry name" value="GPCR_Rhodpsn"/>
</dbReference>
<dbReference type="InterPro" id="IPR017452">
    <property type="entry name" value="GPCR_Rhodpsn_7TM"/>
</dbReference>
<dbReference type="InterPro" id="IPR008361">
    <property type="entry name" value="MCH_rcpt"/>
</dbReference>
<dbReference type="InterPro" id="IPR004047">
    <property type="entry name" value="MCHR1"/>
</dbReference>
<dbReference type="PANTHER" id="PTHR24229:SF91">
    <property type="entry name" value="MELANIN-CONCENTRATING HORMONE RECEPTOR 1"/>
    <property type="match status" value="1"/>
</dbReference>
<dbReference type="PANTHER" id="PTHR24229">
    <property type="entry name" value="NEUROPEPTIDES RECEPTOR"/>
    <property type="match status" value="1"/>
</dbReference>
<dbReference type="Pfam" id="PF00001">
    <property type="entry name" value="7tm_1"/>
    <property type="match status" value="1"/>
</dbReference>
<dbReference type="PRINTS" id="PR00237">
    <property type="entry name" value="GPCRRHODOPSN"/>
</dbReference>
<dbReference type="PRINTS" id="PR01507">
    <property type="entry name" value="MCH1RECEPTOR"/>
</dbReference>
<dbReference type="PRINTS" id="PR01783">
    <property type="entry name" value="MCHRECEPTOR"/>
</dbReference>
<dbReference type="SMART" id="SM01381">
    <property type="entry name" value="7TM_GPCR_Srsx"/>
    <property type="match status" value="1"/>
</dbReference>
<dbReference type="SUPFAM" id="SSF81321">
    <property type="entry name" value="Family A G protein-coupled receptor-like"/>
    <property type="match status" value="1"/>
</dbReference>
<dbReference type="PROSITE" id="PS50262">
    <property type="entry name" value="G_PROTEIN_RECEP_F1_2"/>
    <property type="match status" value="1"/>
</dbReference>
<sequence length="353" mass="39063">MDLQTSLLSTGPNASNISDGQDNLTLPGSPPRTGSVSYINIIMPSVFGTICLLGIVGNSTVIFAVVKKSKLHWCSNVPDIFIINLSVVDLLFLLGMPFMIHQLMGNGVWHFGETMCTLITAMDANSQFTSTYILTAMTIDRYLATVHPISSTKFRKPSMATLVICLLWALSFISITPVWLYARLIPFPGGAVGCGIRLPNPDTDLYWFTLYQFFLAFALPFVVITAAYVKILQRMTSSVAPASQRSIRLRTKRVTRTAIAICLVFFVCWAPYYVLQLTQLSISRPTLTFVYLYNAAISLGYANSCLNPFVYIVLCETFRKRLVLSVKPAAQGQLRTVSNAQTADEERTESKGT</sequence>
<gene>
    <name evidence="9" type="primary">Mchr1</name>
    <name type="synonym">Gpr24</name>
    <name type="synonym">Slc1</name>
</gene>
<feature type="chain" id="PRO_0000069739" description="Melanin-concentrating hormone receptor 1">
    <location>
        <begin position="1"/>
        <end position="353"/>
    </location>
</feature>
<feature type="topological domain" description="Extracellular" evidence="7">
    <location>
        <begin position="1"/>
        <end position="45"/>
    </location>
</feature>
<feature type="transmembrane region" description="Helical; Name=1" evidence="2">
    <location>
        <begin position="46"/>
        <end position="66"/>
    </location>
</feature>
<feature type="topological domain" description="Cytoplasmic" evidence="7">
    <location>
        <begin position="67"/>
        <end position="79"/>
    </location>
</feature>
<feature type="transmembrane region" description="Helical; Name=2" evidence="2">
    <location>
        <begin position="80"/>
        <end position="100"/>
    </location>
</feature>
<feature type="topological domain" description="Extracellular" evidence="7">
    <location>
        <begin position="101"/>
        <end position="116"/>
    </location>
</feature>
<feature type="transmembrane region" description="Helical; Name=3" evidence="2">
    <location>
        <begin position="117"/>
        <end position="139"/>
    </location>
</feature>
<feature type="topological domain" description="Cytoplasmic" evidence="7">
    <location>
        <begin position="140"/>
        <end position="161"/>
    </location>
</feature>
<feature type="transmembrane region" description="Helical; Name=4" evidence="2">
    <location>
        <begin position="162"/>
        <end position="182"/>
    </location>
</feature>
<feature type="topological domain" description="Extracellular" evidence="7">
    <location>
        <begin position="183"/>
        <end position="204"/>
    </location>
</feature>
<feature type="transmembrane region" description="Helical; Name=5" evidence="2">
    <location>
        <begin position="205"/>
        <end position="225"/>
    </location>
</feature>
<feature type="topological domain" description="Cytoplasmic" evidence="7">
    <location>
        <begin position="226"/>
        <end position="256"/>
    </location>
</feature>
<feature type="transmembrane region" description="Helical; Name=6" evidence="2">
    <location>
        <begin position="257"/>
        <end position="277"/>
    </location>
</feature>
<feature type="topological domain" description="Extracellular" evidence="7">
    <location>
        <begin position="278"/>
        <end position="294"/>
    </location>
</feature>
<feature type="transmembrane region" description="Helical; Name=7" evidence="2">
    <location>
        <begin position="295"/>
        <end position="315"/>
    </location>
</feature>
<feature type="topological domain" description="Cytoplasmic" evidence="7">
    <location>
        <begin position="316"/>
        <end position="353"/>
    </location>
</feature>
<feature type="region of interest" description="Disordered" evidence="4">
    <location>
        <begin position="1"/>
        <end position="26"/>
    </location>
</feature>
<feature type="glycosylation site" description="N-linked (GlcNAc...) asparagine" evidence="2">
    <location>
        <position position="13"/>
    </location>
</feature>
<feature type="glycosylation site" description="N-linked (GlcNAc...) asparagine" evidence="2">
    <location>
        <position position="16"/>
    </location>
</feature>
<feature type="glycosylation site" description="N-linked (GlcNAc...) asparagine" evidence="2">
    <location>
        <position position="23"/>
    </location>
</feature>
<feature type="disulfide bond" evidence="3">
    <location>
        <begin position="116"/>
        <end position="194"/>
    </location>
</feature>
<accession>P97639</accession>
<accession>A0A140TAD3</accession>
<reference key="1">
    <citation type="journal article" date="1998" name="Biochim. Biophys. Acta">
        <title>Cloning of the rat brain cDNA encoding for the SLC-1 G protein-coupled receptor reveals the presence of an intron in the gene.</title>
        <authorList>
            <person name="Lakaye B."/>
            <person name="Minet A."/>
            <person name="Zorzi W."/>
            <person name="Grisar T."/>
        </authorList>
    </citation>
    <scope>NUCLEOTIDE SEQUENCE [MRNA]</scope>
    <source>
        <tissue>Brain</tissue>
    </source>
</reference>
<reference key="2">
    <citation type="journal article" date="2004" name="Nature">
        <title>Genome sequence of the Brown Norway rat yields insights into mammalian evolution.</title>
        <authorList>
            <person name="Gibbs R.A."/>
            <person name="Weinstock G.M."/>
            <person name="Metzker M.L."/>
            <person name="Muzny D.M."/>
            <person name="Sodergren E.J."/>
            <person name="Scherer S."/>
            <person name="Scott G."/>
            <person name="Steffen D."/>
            <person name="Worley K.C."/>
            <person name="Burch P.E."/>
            <person name="Okwuonu G."/>
            <person name="Hines S."/>
            <person name="Lewis L."/>
            <person name="Deramo C."/>
            <person name="Delgado O."/>
            <person name="Dugan-Rocha S."/>
            <person name="Miner G."/>
            <person name="Morgan M."/>
            <person name="Hawes A."/>
            <person name="Gill R."/>
            <person name="Holt R.A."/>
            <person name="Adams M.D."/>
            <person name="Amanatides P.G."/>
            <person name="Baden-Tillson H."/>
            <person name="Barnstead M."/>
            <person name="Chin S."/>
            <person name="Evans C.A."/>
            <person name="Ferriera S."/>
            <person name="Fosler C."/>
            <person name="Glodek A."/>
            <person name="Gu Z."/>
            <person name="Jennings D."/>
            <person name="Kraft C.L."/>
            <person name="Nguyen T."/>
            <person name="Pfannkoch C.M."/>
            <person name="Sitter C."/>
            <person name="Sutton G.G."/>
            <person name="Venter J.C."/>
            <person name="Woodage T."/>
            <person name="Smith D."/>
            <person name="Lee H.-M."/>
            <person name="Gustafson E."/>
            <person name="Cahill P."/>
            <person name="Kana A."/>
            <person name="Doucette-Stamm L."/>
            <person name="Weinstock K."/>
            <person name="Fechtel K."/>
            <person name="Weiss R.B."/>
            <person name="Dunn D.M."/>
            <person name="Green E.D."/>
            <person name="Blakesley R.W."/>
            <person name="Bouffard G.G."/>
            <person name="De Jong P.J."/>
            <person name="Osoegawa K."/>
            <person name="Zhu B."/>
            <person name="Marra M."/>
            <person name="Schein J."/>
            <person name="Bosdet I."/>
            <person name="Fjell C."/>
            <person name="Jones S."/>
            <person name="Krzywinski M."/>
            <person name="Mathewson C."/>
            <person name="Siddiqui A."/>
            <person name="Wye N."/>
            <person name="McPherson J."/>
            <person name="Zhao S."/>
            <person name="Fraser C.M."/>
            <person name="Shetty J."/>
            <person name="Shatsman S."/>
            <person name="Geer K."/>
            <person name="Chen Y."/>
            <person name="Abramzon S."/>
            <person name="Nierman W.C."/>
            <person name="Havlak P.H."/>
            <person name="Chen R."/>
            <person name="Durbin K.J."/>
            <person name="Egan A."/>
            <person name="Ren Y."/>
            <person name="Song X.-Z."/>
            <person name="Li B."/>
            <person name="Liu Y."/>
            <person name="Qin X."/>
            <person name="Cawley S."/>
            <person name="Cooney A.J."/>
            <person name="D'Souza L.M."/>
            <person name="Martin K."/>
            <person name="Wu J.Q."/>
            <person name="Gonzalez-Garay M.L."/>
            <person name="Jackson A.R."/>
            <person name="Kalafus K.J."/>
            <person name="McLeod M.P."/>
            <person name="Milosavljevic A."/>
            <person name="Virk D."/>
            <person name="Volkov A."/>
            <person name="Wheeler D.A."/>
            <person name="Zhang Z."/>
            <person name="Bailey J.A."/>
            <person name="Eichler E.E."/>
            <person name="Tuzun E."/>
            <person name="Birney E."/>
            <person name="Mongin E."/>
            <person name="Ureta-Vidal A."/>
            <person name="Woodwark C."/>
            <person name="Zdobnov E."/>
            <person name="Bork P."/>
            <person name="Suyama M."/>
            <person name="Torrents D."/>
            <person name="Alexandersson M."/>
            <person name="Trask B.J."/>
            <person name="Young J.M."/>
            <person name="Huang H."/>
            <person name="Wang H."/>
            <person name="Xing H."/>
            <person name="Daniels S."/>
            <person name="Gietzen D."/>
            <person name="Schmidt J."/>
            <person name="Stevens K."/>
            <person name="Vitt U."/>
            <person name="Wingrove J."/>
            <person name="Camara F."/>
            <person name="Mar Alba M."/>
            <person name="Abril J.F."/>
            <person name="Guigo R."/>
            <person name="Smit A."/>
            <person name="Dubchak I."/>
            <person name="Rubin E.M."/>
            <person name="Couronne O."/>
            <person name="Poliakov A."/>
            <person name="Huebner N."/>
            <person name="Ganten D."/>
            <person name="Goesele C."/>
            <person name="Hummel O."/>
            <person name="Kreitler T."/>
            <person name="Lee Y.-A."/>
            <person name="Monti J."/>
            <person name="Schulz H."/>
            <person name="Zimdahl H."/>
            <person name="Himmelbauer H."/>
            <person name="Lehrach H."/>
            <person name="Jacob H.J."/>
            <person name="Bromberg S."/>
            <person name="Gullings-Handley J."/>
            <person name="Jensen-Seaman M.I."/>
            <person name="Kwitek A.E."/>
            <person name="Lazar J."/>
            <person name="Pasko D."/>
            <person name="Tonellato P.J."/>
            <person name="Twigger S."/>
            <person name="Ponting C.P."/>
            <person name="Duarte J.M."/>
            <person name="Rice S."/>
            <person name="Goodstadt L."/>
            <person name="Beatson S.A."/>
            <person name="Emes R.D."/>
            <person name="Winter E.E."/>
            <person name="Webber C."/>
            <person name="Brandt P."/>
            <person name="Nyakatura G."/>
            <person name="Adetobi M."/>
            <person name="Chiaromonte F."/>
            <person name="Elnitski L."/>
            <person name="Eswara P."/>
            <person name="Hardison R.C."/>
            <person name="Hou M."/>
            <person name="Kolbe D."/>
            <person name="Makova K."/>
            <person name="Miller W."/>
            <person name="Nekrutenko A."/>
            <person name="Riemer C."/>
            <person name="Schwartz S."/>
            <person name="Taylor J."/>
            <person name="Yang S."/>
            <person name="Zhang Y."/>
            <person name="Lindpaintner K."/>
            <person name="Andrews T.D."/>
            <person name="Caccamo M."/>
            <person name="Clamp M."/>
            <person name="Clarke L."/>
            <person name="Curwen V."/>
            <person name="Durbin R.M."/>
            <person name="Eyras E."/>
            <person name="Searle S.M."/>
            <person name="Cooper G.M."/>
            <person name="Batzoglou S."/>
            <person name="Brudno M."/>
            <person name="Sidow A."/>
            <person name="Stone E.A."/>
            <person name="Payseur B.A."/>
            <person name="Bourque G."/>
            <person name="Lopez-Otin C."/>
            <person name="Puente X.S."/>
            <person name="Chakrabarti K."/>
            <person name="Chatterji S."/>
            <person name="Dewey C."/>
            <person name="Pachter L."/>
            <person name="Bray N."/>
            <person name="Yap V.B."/>
            <person name="Caspi A."/>
            <person name="Tesler G."/>
            <person name="Pevzner P.A."/>
            <person name="Haussler D."/>
            <person name="Roskin K.M."/>
            <person name="Baertsch R."/>
            <person name="Clawson H."/>
            <person name="Furey T.S."/>
            <person name="Hinrichs A.S."/>
            <person name="Karolchik D."/>
            <person name="Kent W.J."/>
            <person name="Rosenbloom K.R."/>
            <person name="Trumbower H."/>
            <person name="Weirauch M."/>
            <person name="Cooper D.N."/>
            <person name="Stenson P.D."/>
            <person name="Ma B."/>
            <person name="Brent M."/>
            <person name="Arumugam M."/>
            <person name="Shteynberg D."/>
            <person name="Copley R.R."/>
            <person name="Taylor M.S."/>
            <person name="Riethman H."/>
            <person name="Mudunuri U."/>
            <person name="Peterson J."/>
            <person name="Guyer M."/>
            <person name="Felsenfeld A."/>
            <person name="Old S."/>
            <person name="Mockrin S."/>
            <person name="Collins F.S."/>
        </authorList>
    </citation>
    <scope>NUCLEOTIDE SEQUENCE [LARGE SCALE GENOMIC DNA]</scope>
    <source>
        <strain>Brown Norway</strain>
    </source>
</reference>
<reference key="3">
    <citation type="submission" date="2005-09" db="EMBL/GenBank/DDBJ databases">
        <authorList>
            <person name="Mural R.J."/>
            <person name="Adams M.D."/>
            <person name="Myers E.W."/>
            <person name="Smith H.O."/>
            <person name="Venter J.C."/>
        </authorList>
    </citation>
    <scope>NUCLEOTIDE SEQUENCE [LARGE SCALE GENOMIC DNA]</scope>
    <source>
        <strain>Brown Norway</strain>
    </source>
</reference>
<reference key="4">
    <citation type="journal article" date="1996" name="FEBS Lett.">
        <title>Characterization of a human gene related to genes encoding somatostatin receptors.</title>
        <authorList>
            <person name="Kolakowski L.F. Jr."/>
            <person name="Jung B.P."/>
            <person name="Nguyen T."/>
            <person name="Johnson M.P."/>
            <person name="Lynch K.R."/>
            <person name="Cheng R."/>
            <person name="Heng H.H.Q."/>
            <person name="George S.R."/>
            <person name="O'Dowd B.F."/>
        </authorList>
    </citation>
    <scope>NUCLEOTIDE SEQUENCE [GENOMIC DNA] OF 143-300</scope>
</reference>
<reference key="5">
    <citation type="journal article" date="1999" name="Nat. Cell Biol.">
        <title>The receptor for the orexigenic peptide melanin-concentrating hormone is a G-protein-coupled receptor.</title>
        <authorList>
            <person name="Lembo P.M.C."/>
            <person name="Grazzini E."/>
            <person name="Cao J."/>
            <person name="Hubatsch D.A."/>
            <person name="Pelletier M."/>
            <person name="Hoffert C."/>
            <person name="St Onge S."/>
            <person name="Pou C."/>
            <person name="Labrecque J."/>
            <person name="Groblewski T."/>
            <person name="O'Donnell D."/>
            <person name="Payza K."/>
            <person name="Ahmad S."/>
            <person name="Walker P."/>
        </authorList>
    </citation>
    <scope>FUNCTION</scope>
</reference>
<reference key="6">
    <citation type="journal article" date="1999" name="Nature">
        <title>Molecular characterization of the melanin-concentrating-hormone receptor.</title>
        <authorList>
            <person name="Saito Y."/>
            <person name="Nothacker H.P."/>
            <person name="Wang Z."/>
            <person name="Lin S.H."/>
            <person name="Leslie F."/>
            <person name="Civelli O."/>
        </authorList>
    </citation>
    <scope>FUNCTION</scope>
</reference>
<organism>
    <name type="scientific">Rattus norvegicus</name>
    <name type="common">Rat</name>
    <dbReference type="NCBI Taxonomy" id="10116"/>
    <lineage>
        <taxon>Eukaryota</taxon>
        <taxon>Metazoa</taxon>
        <taxon>Chordata</taxon>
        <taxon>Craniata</taxon>
        <taxon>Vertebrata</taxon>
        <taxon>Euteleostomi</taxon>
        <taxon>Mammalia</taxon>
        <taxon>Eutheria</taxon>
        <taxon>Euarchontoglires</taxon>
        <taxon>Glires</taxon>
        <taxon>Rodentia</taxon>
        <taxon>Myomorpha</taxon>
        <taxon>Muroidea</taxon>
        <taxon>Muridae</taxon>
        <taxon>Murinae</taxon>
        <taxon>Rattus</taxon>
    </lineage>
</organism>
<name>MCHR1_RAT</name>
<evidence type="ECO:0000250" key="1">
    <source>
        <dbReference type="UniProtKB" id="Q99705"/>
    </source>
</evidence>
<evidence type="ECO:0000255" key="2"/>
<evidence type="ECO:0000255" key="3">
    <source>
        <dbReference type="PROSITE-ProRule" id="PRU00521"/>
    </source>
</evidence>
<evidence type="ECO:0000256" key="4">
    <source>
        <dbReference type="SAM" id="MobiDB-lite"/>
    </source>
</evidence>
<evidence type="ECO:0000269" key="5">
    <source>
    </source>
</evidence>
<evidence type="ECO:0000269" key="6">
    <source>
    </source>
</evidence>
<evidence type="ECO:0000305" key="7"/>
<evidence type="ECO:0000305" key="8">
    <source>
    </source>
</evidence>
<evidence type="ECO:0000312" key="9">
    <source>
        <dbReference type="RGD" id="619841"/>
    </source>
</evidence>
<protein>
    <recommendedName>
        <fullName evidence="8">Melanin-concentrating hormone receptor 1</fullName>
        <shortName>MCH receptor 1</shortName>
        <shortName>MCH-R1</shortName>
        <shortName>MCHR-1</shortName>
    </recommendedName>
    <alternativeName>
        <fullName>G-protein coupled receptor 24</fullName>
    </alternativeName>
    <alternativeName>
        <fullName>MCH-1R</fullName>
        <shortName>MCH1R</shortName>
        <shortName>MCHR</shortName>
    </alternativeName>
    <alternativeName>
        <fullName>SLC-1</fullName>
    </alternativeName>
    <alternativeName>
        <fullName>Somatostatin receptor-like protein</fullName>
    </alternativeName>
</protein>